<evidence type="ECO:0000255" key="1">
    <source>
        <dbReference type="PROSITE-ProRule" id="PRU00175"/>
    </source>
</evidence>
<accession>Q08CG8</accession>
<dbReference type="EMBL" id="BC124246">
    <property type="protein sequence ID" value="AAI24247.1"/>
    <property type="molecule type" value="mRNA"/>
</dbReference>
<dbReference type="RefSeq" id="NP_001070092.1">
    <property type="nucleotide sequence ID" value="NM_001076624.1"/>
</dbReference>
<dbReference type="RefSeq" id="XP_005168277.1">
    <property type="nucleotide sequence ID" value="XM_005168220.5"/>
</dbReference>
<dbReference type="SMR" id="Q08CG8"/>
<dbReference type="FunCoup" id="Q08CG8">
    <property type="interactions" value="358"/>
</dbReference>
<dbReference type="STRING" id="7955.ENSDARP00000153402"/>
<dbReference type="PaxDb" id="7955-ENSDARP00000090007"/>
<dbReference type="Ensembl" id="ENSDART00000146918">
    <property type="protein sequence ID" value="ENSDARP00000153402"/>
    <property type="gene ID" value="ENSDARG00000068582"/>
</dbReference>
<dbReference type="GeneID" id="767686"/>
<dbReference type="KEGG" id="dre:767686"/>
<dbReference type="AGR" id="ZFIN:ZDB-GENE-060929-604"/>
<dbReference type="CTD" id="22838"/>
<dbReference type="ZFIN" id="ZDB-GENE-060929-604">
    <property type="gene designation" value="rnf44"/>
</dbReference>
<dbReference type="eggNOG" id="KOG0800">
    <property type="taxonomic scope" value="Eukaryota"/>
</dbReference>
<dbReference type="InParanoid" id="Q08CG8"/>
<dbReference type="OMA" id="MSSEHFV"/>
<dbReference type="OrthoDB" id="8062037at2759"/>
<dbReference type="PhylomeDB" id="Q08CG8"/>
<dbReference type="TreeFam" id="TF325756"/>
<dbReference type="PRO" id="PR:Q08CG8"/>
<dbReference type="Proteomes" id="UP000000437">
    <property type="component" value="Chromosome 14"/>
</dbReference>
<dbReference type="Bgee" id="ENSDARG00000068582">
    <property type="expression patterns" value="Expressed in cardiac ventricle and 24 other cell types or tissues"/>
</dbReference>
<dbReference type="ExpressionAtlas" id="Q08CG8">
    <property type="expression patterns" value="baseline and differential"/>
</dbReference>
<dbReference type="GO" id="GO:0061630">
    <property type="term" value="F:ubiquitin protein ligase activity"/>
    <property type="evidence" value="ECO:0000318"/>
    <property type="project" value="GO_Central"/>
</dbReference>
<dbReference type="GO" id="GO:0008270">
    <property type="term" value="F:zinc ion binding"/>
    <property type="evidence" value="ECO:0007669"/>
    <property type="project" value="UniProtKB-KW"/>
</dbReference>
<dbReference type="GO" id="GO:0016567">
    <property type="term" value="P:protein ubiquitination"/>
    <property type="evidence" value="ECO:0000318"/>
    <property type="project" value="GO_Central"/>
</dbReference>
<dbReference type="CDD" id="cd16680">
    <property type="entry name" value="RING-H2_RNF44"/>
    <property type="match status" value="1"/>
</dbReference>
<dbReference type="FunFam" id="3.30.40.10:FF:000024">
    <property type="entry name" value="RING finger protein 44 isoform X1"/>
    <property type="match status" value="1"/>
</dbReference>
<dbReference type="Gene3D" id="3.30.40.10">
    <property type="entry name" value="Zinc/RING finger domain, C3HC4 (zinc finger)"/>
    <property type="match status" value="1"/>
</dbReference>
<dbReference type="InterPro" id="IPR001841">
    <property type="entry name" value="Znf_RING"/>
</dbReference>
<dbReference type="InterPro" id="IPR013083">
    <property type="entry name" value="Znf_RING/FYVE/PHD"/>
</dbReference>
<dbReference type="PANTHER" id="PTHR46171">
    <property type="entry name" value="GH10160P"/>
    <property type="match status" value="1"/>
</dbReference>
<dbReference type="PANTHER" id="PTHR46171:SF2">
    <property type="entry name" value="RING FINGER PROTEIN 44"/>
    <property type="match status" value="1"/>
</dbReference>
<dbReference type="Pfam" id="PF13639">
    <property type="entry name" value="zf-RING_2"/>
    <property type="match status" value="1"/>
</dbReference>
<dbReference type="SMART" id="SM00184">
    <property type="entry name" value="RING"/>
    <property type="match status" value="1"/>
</dbReference>
<dbReference type="SUPFAM" id="SSF57850">
    <property type="entry name" value="RING/U-box"/>
    <property type="match status" value="1"/>
</dbReference>
<dbReference type="PROSITE" id="PS50089">
    <property type="entry name" value="ZF_RING_2"/>
    <property type="match status" value="1"/>
</dbReference>
<reference key="1">
    <citation type="submission" date="2006-09" db="EMBL/GenBank/DDBJ databases">
        <authorList>
            <consortium name="NIH - Zebrafish Gene Collection (ZGC) project"/>
        </authorList>
    </citation>
    <scope>NUCLEOTIDE SEQUENCE [LARGE SCALE MRNA]</scope>
    <source>
        <tissue>Eye</tissue>
    </source>
</reference>
<keyword id="KW-0479">Metal-binding</keyword>
<keyword id="KW-1185">Reference proteome</keyword>
<keyword id="KW-0862">Zinc</keyword>
<keyword id="KW-0863">Zinc-finger</keyword>
<protein>
    <recommendedName>
        <fullName>RING finger protein 44</fullName>
    </recommendedName>
</protein>
<proteinExistence type="evidence at transcript level"/>
<gene>
    <name type="primary">rnf44</name>
    <name type="ORF">zgc:153103</name>
</gene>
<feature type="chain" id="PRO_0000273416" description="RING finger protein 44">
    <location>
        <begin position="1"/>
        <end position="448"/>
    </location>
</feature>
<feature type="zinc finger region" description="RING-type; atypical" evidence="1">
    <location>
        <begin position="396"/>
        <end position="437"/>
    </location>
</feature>
<name>RNF44_DANRE</name>
<sequence length="448" mass="50647">MRPWEVAVSRRPTTAPLNQRRLVGEPCITPLHLRRSPPVRHQWGQRDRPALHTSLHQDENFHHAVFSQHQQVPLDESRQYSHSGAAPRMLHTANQPPQQSSIMVDLHEQMHQGSVPISYTVTTVTTHGFPIHTGQPIPACNAQQLPACSVMFSGQLSLLCCLPPPLIQACTMQHLPVSYQAFPPLISSEHFILHPSPAVAPHQPPPHPPHPPPPHLPPINQFVPIQPQHPRMPLQRVENEVDLRGDQHPLGTFSYPPAHHPPALTPSVPLQYLPQETLHQELPYPVPYPHMLPRRITGQRYRLQQPLPPPPPPPPYYPGFLPYFLSMLPVPPTAVGPAISLDLDVDDVEMENYEALLNLAERLGEAKPRGLTKADIEQLPSYRFNLENHQSEQTLCVVCFSDFESRQLLRVLPCNHEFHAKCVDKWLKTNRTCPICRADASEVHRDVE</sequence>
<organism>
    <name type="scientific">Danio rerio</name>
    <name type="common">Zebrafish</name>
    <name type="synonym">Brachydanio rerio</name>
    <dbReference type="NCBI Taxonomy" id="7955"/>
    <lineage>
        <taxon>Eukaryota</taxon>
        <taxon>Metazoa</taxon>
        <taxon>Chordata</taxon>
        <taxon>Craniata</taxon>
        <taxon>Vertebrata</taxon>
        <taxon>Euteleostomi</taxon>
        <taxon>Actinopterygii</taxon>
        <taxon>Neopterygii</taxon>
        <taxon>Teleostei</taxon>
        <taxon>Ostariophysi</taxon>
        <taxon>Cypriniformes</taxon>
        <taxon>Danionidae</taxon>
        <taxon>Danioninae</taxon>
        <taxon>Danio</taxon>
    </lineage>
</organism>